<gene>
    <name evidence="1" type="primary">pdxY</name>
    <name type="ordered locus">Bcep18194_A4279</name>
</gene>
<comment type="function">
    <text evidence="1">Pyridoxal kinase involved in the salvage pathway of pyridoxal 5'-phosphate (PLP). Catalyzes the phosphorylation of pyridoxal to PLP.</text>
</comment>
<comment type="catalytic activity">
    <reaction evidence="1">
        <text>pyridoxal + ATP = pyridoxal 5'-phosphate + ADP + H(+)</text>
        <dbReference type="Rhea" id="RHEA:10224"/>
        <dbReference type="ChEBI" id="CHEBI:15378"/>
        <dbReference type="ChEBI" id="CHEBI:17310"/>
        <dbReference type="ChEBI" id="CHEBI:30616"/>
        <dbReference type="ChEBI" id="CHEBI:456216"/>
        <dbReference type="ChEBI" id="CHEBI:597326"/>
        <dbReference type="EC" id="2.7.1.35"/>
    </reaction>
</comment>
<comment type="cofactor">
    <cofactor evidence="1">
        <name>Mg(2+)</name>
        <dbReference type="ChEBI" id="CHEBI:18420"/>
    </cofactor>
</comment>
<comment type="pathway">
    <text evidence="1">Cofactor metabolism; pyridoxal 5'-phosphate salvage; pyridoxal 5'-phosphate from pyridoxal: step 1/1.</text>
</comment>
<comment type="subunit">
    <text evidence="1">Homodimer.</text>
</comment>
<comment type="similarity">
    <text evidence="1">Belongs to the pyridoxine kinase family. PdxY subfamily.</text>
</comment>
<comment type="sequence caution" evidence="2">
    <conflict type="erroneous initiation">
        <sequence resource="EMBL-CDS" id="ABB07876"/>
    </conflict>
</comment>
<feature type="chain" id="PRO_0000269800" description="Pyridoxal kinase PdxY">
    <location>
        <begin position="1"/>
        <end position="286"/>
    </location>
</feature>
<feature type="binding site" evidence="1">
    <location>
        <position position="9"/>
    </location>
    <ligand>
        <name>substrate</name>
    </ligand>
</feature>
<feature type="binding site" evidence="1">
    <location>
        <begin position="44"/>
        <end position="45"/>
    </location>
    <ligand>
        <name>substrate</name>
    </ligand>
</feature>
<feature type="binding site" evidence="1">
    <location>
        <position position="111"/>
    </location>
    <ligand>
        <name>ATP</name>
        <dbReference type="ChEBI" id="CHEBI:30616"/>
    </ligand>
</feature>
<feature type="binding site" evidence="1">
    <location>
        <position position="147"/>
    </location>
    <ligand>
        <name>ATP</name>
        <dbReference type="ChEBI" id="CHEBI:30616"/>
    </ligand>
</feature>
<feature type="binding site" evidence="1">
    <location>
        <position position="180"/>
    </location>
    <ligand>
        <name>ATP</name>
        <dbReference type="ChEBI" id="CHEBI:30616"/>
    </ligand>
</feature>
<feature type="binding site" evidence="1">
    <location>
        <position position="221"/>
    </location>
    <ligand>
        <name>substrate</name>
    </ligand>
</feature>
<protein>
    <recommendedName>
        <fullName evidence="1">Pyridoxal kinase PdxY</fullName>
        <shortName evidence="1">PL kinase</shortName>
        <ecNumber evidence="1">2.7.1.35</ecNumber>
    </recommendedName>
</protein>
<proteinExistence type="inferred from homology"/>
<organism>
    <name type="scientific">Burkholderia lata (strain ATCC 17760 / DSM 23089 / LMG 22485 / NCIMB 9086 / R18194 / 383)</name>
    <dbReference type="NCBI Taxonomy" id="482957"/>
    <lineage>
        <taxon>Bacteria</taxon>
        <taxon>Pseudomonadati</taxon>
        <taxon>Pseudomonadota</taxon>
        <taxon>Betaproteobacteria</taxon>
        <taxon>Burkholderiales</taxon>
        <taxon>Burkholderiaceae</taxon>
        <taxon>Burkholderia</taxon>
        <taxon>Burkholderia cepacia complex</taxon>
    </lineage>
</organism>
<name>PDXY_BURL3</name>
<reference key="1">
    <citation type="submission" date="2005-10" db="EMBL/GenBank/DDBJ databases">
        <title>Complete sequence of chromosome 1 of Burkholderia sp. 383.</title>
        <authorList>
            <consortium name="US DOE Joint Genome Institute"/>
            <person name="Copeland A."/>
            <person name="Lucas S."/>
            <person name="Lapidus A."/>
            <person name="Barry K."/>
            <person name="Detter J.C."/>
            <person name="Glavina T."/>
            <person name="Hammon N."/>
            <person name="Israni S."/>
            <person name="Pitluck S."/>
            <person name="Chain P."/>
            <person name="Malfatti S."/>
            <person name="Shin M."/>
            <person name="Vergez L."/>
            <person name="Schmutz J."/>
            <person name="Larimer F."/>
            <person name="Land M."/>
            <person name="Kyrpides N."/>
            <person name="Lykidis A."/>
            <person name="Richardson P."/>
        </authorList>
    </citation>
    <scope>NUCLEOTIDE SEQUENCE [LARGE SCALE GENOMIC DNA]</scope>
    <source>
        <strain>ATCC 17760 / DSM 23089 / LMG 22485 / NCIMB 9086 / R18194 / 383</strain>
    </source>
</reference>
<accession>Q39I40</accession>
<dbReference type="EC" id="2.7.1.35" evidence="1"/>
<dbReference type="EMBL" id="CP000151">
    <property type="protein sequence ID" value="ABB07876.1"/>
    <property type="status" value="ALT_INIT"/>
    <property type="molecule type" value="Genomic_DNA"/>
</dbReference>
<dbReference type="RefSeq" id="WP_041492785.1">
    <property type="nucleotide sequence ID" value="NZ_WNDV01000016.1"/>
</dbReference>
<dbReference type="SMR" id="Q39I40"/>
<dbReference type="GeneID" id="45094184"/>
<dbReference type="KEGG" id="bur:Bcep18194_A4279"/>
<dbReference type="PATRIC" id="fig|482957.22.peg.1172"/>
<dbReference type="HOGENOM" id="CLU_046496_3_0_4"/>
<dbReference type="UniPathway" id="UPA01068">
    <property type="reaction ID" value="UER00298"/>
</dbReference>
<dbReference type="Proteomes" id="UP000002705">
    <property type="component" value="Chromosome 1"/>
</dbReference>
<dbReference type="GO" id="GO:0005829">
    <property type="term" value="C:cytosol"/>
    <property type="evidence" value="ECO:0007669"/>
    <property type="project" value="TreeGrafter"/>
</dbReference>
<dbReference type="GO" id="GO:0005524">
    <property type="term" value="F:ATP binding"/>
    <property type="evidence" value="ECO:0007669"/>
    <property type="project" value="UniProtKB-UniRule"/>
</dbReference>
<dbReference type="GO" id="GO:0000287">
    <property type="term" value="F:magnesium ion binding"/>
    <property type="evidence" value="ECO:0007669"/>
    <property type="project" value="UniProtKB-UniRule"/>
</dbReference>
<dbReference type="GO" id="GO:0008478">
    <property type="term" value="F:pyridoxal kinase activity"/>
    <property type="evidence" value="ECO:0007669"/>
    <property type="project" value="UniProtKB-UniRule"/>
</dbReference>
<dbReference type="GO" id="GO:0009443">
    <property type="term" value="P:pyridoxal 5'-phosphate salvage"/>
    <property type="evidence" value="ECO:0007669"/>
    <property type="project" value="UniProtKB-UniRule"/>
</dbReference>
<dbReference type="CDD" id="cd01173">
    <property type="entry name" value="pyridoxal_pyridoxamine_kinase"/>
    <property type="match status" value="1"/>
</dbReference>
<dbReference type="FunFam" id="3.40.1190.20:FF:000008">
    <property type="entry name" value="Pyridoxal kinase PdxY"/>
    <property type="match status" value="1"/>
</dbReference>
<dbReference type="Gene3D" id="3.40.1190.20">
    <property type="match status" value="1"/>
</dbReference>
<dbReference type="HAMAP" id="MF_01639">
    <property type="entry name" value="PdxY"/>
    <property type="match status" value="1"/>
</dbReference>
<dbReference type="InterPro" id="IPR013749">
    <property type="entry name" value="PM/HMP-P_kinase-1"/>
</dbReference>
<dbReference type="InterPro" id="IPR004625">
    <property type="entry name" value="PyrdxlKinase"/>
</dbReference>
<dbReference type="InterPro" id="IPR023685">
    <property type="entry name" value="Pyridoxal_kinase_PdxY"/>
</dbReference>
<dbReference type="InterPro" id="IPR029056">
    <property type="entry name" value="Ribokinase-like"/>
</dbReference>
<dbReference type="NCBIfam" id="NF004398">
    <property type="entry name" value="PRK05756.1"/>
    <property type="match status" value="1"/>
</dbReference>
<dbReference type="NCBIfam" id="TIGR00687">
    <property type="entry name" value="pyridox_kin"/>
    <property type="match status" value="1"/>
</dbReference>
<dbReference type="PANTHER" id="PTHR10534">
    <property type="entry name" value="PYRIDOXAL KINASE"/>
    <property type="match status" value="1"/>
</dbReference>
<dbReference type="PANTHER" id="PTHR10534:SF2">
    <property type="entry name" value="PYRIDOXAL KINASE"/>
    <property type="match status" value="1"/>
</dbReference>
<dbReference type="Pfam" id="PF08543">
    <property type="entry name" value="Phos_pyr_kin"/>
    <property type="match status" value="1"/>
</dbReference>
<dbReference type="SUPFAM" id="SSF53613">
    <property type="entry name" value="Ribokinase-like"/>
    <property type="match status" value="1"/>
</dbReference>
<keyword id="KW-0067">ATP-binding</keyword>
<keyword id="KW-0418">Kinase</keyword>
<keyword id="KW-0460">Magnesium</keyword>
<keyword id="KW-0547">Nucleotide-binding</keyword>
<keyword id="KW-0808">Transferase</keyword>
<sequence length="286" mass="31243">MKNVLSIQSHVIYGHAGNSAAVFPMQRLGINVWPLNTVQLSNHMQYGHWAGSAIDAAKMEQLVDGIAAIGALKRCDAVLSGFLGSPPQARAAVEIVRSVKAMNPNAWYFCDPAMGQTGGIRPEPGVEEFMVQEMPALADGMSPNHTELQKLAGRRIETVAEAVEACRALIRRGPQIILVKHLHDRNSPADRFNMLAVTETEAWIGQRPLYAFPRHPVGVGDLTSAIFVACRLRGDSVRAAFEHTLAAVHAVVKATYDARRYELELVAAQDEIARPSEWFGAWVTDA</sequence>
<evidence type="ECO:0000255" key="1">
    <source>
        <dbReference type="HAMAP-Rule" id="MF_01639"/>
    </source>
</evidence>
<evidence type="ECO:0000305" key="2"/>